<reference key="1">
    <citation type="journal article" date="1985" name="Gene">
        <title>Nucleotide sequence of the Bacillus subtilis tryptophan operon.</title>
        <authorList>
            <person name="Henner D.J."/>
            <person name="Band L."/>
            <person name="Shimotsu H."/>
        </authorList>
    </citation>
    <scope>NUCLEOTIDE SEQUENCE [GENOMIC DNA]</scope>
</reference>
<reference key="2">
    <citation type="journal article" date="1997" name="Nature">
        <title>The complete genome sequence of the Gram-positive bacterium Bacillus subtilis.</title>
        <authorList>
            <person name="Kunst F."/>
            <person name="Ogasawara N."/>
            <person name="Moszer I."/>
            <person name="Albertini A.M."/>
            <person name="Alloni G."/>
            <person name="Azevedo V."/>
            <person name="Bertero M.G."/>
            <person name="Bessieres P."/>
            <person name="Bolotin A."/>
            <person name="Borchert S."/>
            <person name="Borriss R."/>
            <person name="Boursier L."/>
            <person name="Brans A."/>
            <person name="Braun M."/>
            <person name="Brignell S.C."/>
            <person name="Bron S."/>
            <person name="Brouillet S."/>
            <person name="Bruschi C.V."/>
            <person name="Caldwell B."/>
            <person name="Capuano V."/>
            <person name="Carter N.M."/>
            <person name="Choi S.-K."/>
            <person name="Codani J.-J."/>
            <person name="Connerton I.F."/>
            <person name="Cummings N.J."/>
            <person name="Daniel R.A."/>
            <person name="Denizot F."/>
            <person name="Devine K.M."/>
            <person name="Duesterhoeft A."/>
            <person name="Ehrlich S.D."/>
            <person name="Emmerson P.T."/>
            <person name="Entian K.-D."/>
            <person name="Errington J."/>
            <person name="Fabret C."/>
            <person name="Ferrari E."/>
            <person name="Foulger D."/>
            <person name="Fritz C."/>
            <person name="Fujita M."/>
            <person name="Fujita Y."/>
            <person name="Fuma S."/>
            <person name="Galizzi A."/>
            <person name="Galleron N."/>
            <person name="Ghim S.-Y."/>
            <person name="Glaser P."/>
            <person name="Goffeau A."/>
            <person name="Golightly E.J."/>
            <person name="Grandi G."/>
            <person name="Guiseppi G."/>
            <person name="Guy B.J."/>
            <person name="Haga K."/>
            <person name="Haiech J."/>
            <person name="Harwood C.R."/>
            <person name="Henaut A."/>
            <person name="Hilbert H."/>
            <person name="Holsappel S."/>
            <person name="Hosono S."/>
            <person name="Hullo M.-F."/>
            <person name="Itaya M."/>
            <person name="Jones L.-M."/>
            <person name="Joris B."/>
            <person name="Karamata D."/>
            <person name="Kasahara Y."/>
            <person name="Klaerr-Blanchard M."/>
            <person name="Klein C."/>
            <person name="Kobayashi Y."/>
            <person name="Koetter P."/>
            <person name="Koningstein G."/>
            <person name="Krogh S."/>
            <person name="Kumano M."/>
            <person name="Kurita K."/>
            <person name="Lapidus A."/>
            <person name="Lardinois S."/>
            <person name="Lauber J."/>
            <person name="Lazarevic V."/>
            <person name="Lee S.-M."/>
            <person name="Levine A."/>
            <person name="Liu H."/>
            <person name="Masuda S."/>
            <person name="Mauel C."/>
            <person name="Medigue C."/>
            <person name="Medina N."/>
            <person name="Mellado R.P."/>
            <person name="Mizuno M."/>
            <person name="Moestl D."/>
            <person name="Nakai S."/>
            <person name="Noback M."/>
            <person name="Noone D."/>
            <person name="O'Reilly M."/>
            <person name="Ogawa K."/>
            <person name="Ogiwara A."/>
            <person name="Oudega B."/>
            <person name="Park S.-H."/>
            <person name="Parro V."/>
            <person name="Pohl T.M."/>
            <person name="Portetelle D."/>
            <person name="Porwollik S."/>
            <person name="Prescott A.M."/>
            <person name="Presecan E."/>
            <person name="Pujic P."/>
            <person name="Purnelle B."/>
            <person name="Rapoport G."/>
            <person name="Rey M."/>
            <person name="Reynolds S."/>
            <person name="Rieger M."/>
            <person name="Rivolta C."/>
            <person name="Rocha E."/>
            <person name="Roche B."/>
            <person name="Rose M."/>
            <person name="Sadaie Y."/>
            <person name="Sato T."/>
            <person name="Scanlan E."/>
            <person name="Schleich S."/>
            <person name="Schroeter R."/>
            <person name="Scoffone F."/>
            <person name="Sekiguchi J."/>
            <person name="Sekowska A."/>
            <person name="Seror S.J."/>
            <person name="Serror P."/>
            <person name="Shin B.-S."/>
            <person name="Soldo B."/>
            <person name="Sorokin A."/>
            <person name="Tacconi E."/>
            <person name="Takagi T."/>
            <person name="Takahashi H."/>
            <person name="Takemaru K."/>
            <person name="Takeuchi M."/>
            <person name="Tamakoshi A."/>
            <person name="Tanaka T."/>
            <person name="Terpstra P."/>
            <person name="Tognoni A."/>
            <person name="Tosato V."/>
            <person name="Uchiyama S."/>
            <person name="Vandenbol M."/>
            <person name="Vannier F."/>
            <person name="Vassarotti A."/>
            <person name="Viari A."/>
            <person name="Wambutt R."/>
            <person name="Wedler E."/>
            <person name="Wedler H."/>
            <person name="Weitzenegger T."/>
            <person name="Winters P."/>
            <person name="Wipat A."/>
            <person name="Yamamoto H."/>
            <person name="Yamane K."/>
            <person name="Yasumoto K."/>
            <person name="Yata K."/>
            <person name="Yoshida K."/>
            <person name="Yoshikawa H.-F."/>
            <person name="Zumstein E."/>
            <person name="Yoshikawa H."/>
            <person name="Danchin A."/>
        </authorList>
    </citation>
    <scope>NUCLEOTIDE SEQUENCE [LARGE SCALE GENOMIC DNA]</scope>
    <source>
        <strain>168</strain>
    </source>
</reference>
<reference key="3">
    <citation type="journal article" date="1993" name="Biosci. Biotechnol. Biochem.">
        <title>Cloning and nucleotide sequence of the Bacillus subtilis K trpB gene encoding tryptophan synthase beta-subunit.</title>
        <authorList>
            <person name="Kurahashi O."/>
            <person name="Kawashima H."/>
            <person name="Nakamori S."/>
            <person name="Yamane K."/>
        </authorList>
    </citation>
    <scope>NUCLEOTIDE SEQUENCE [GENOMIC DNA] OF 1-182</scope>
    <source>
        <strain>K</strain>
    </source>
</reference>
<proteinExistence type="inferred from homology"/>
<gene>
    <name evidence="1" type="primary">trpA</name>
    <name type="ordered locus">BSU22630</name>
</gene>
<comment type="function">
    <text>The alpha subunit is responsible for the aldol cleavage of indoleglycerol phosphate to indole and glyceraldehyde 3-phosphate.</text>
</comment>
<comment type="catalytic activity">
    <reaction evidence="1">
        <text>(1S,2R)-1-C-(indol-3-yl)glycerol 3-phosphate + L-serine = D-glyceraldehyde 3-phosphate + L-tryptophan + H2O</text>
        <dbReference type="Rhea" id="RHEA:10532"/>
        <dbReference type="ChEBI" id="CHEBI:15377"/>
        <dbReference type="ChEBI" id="CHEBI:33384"/>
        <dbReference type="ChEBI" id="CHEBI:57912"/>
        <dbReference type="ChEBI" id="CHEBI:58866"/>
        <dbReference type="ChEBI" id="CHEBI:59776"/>
        <dbReference type="EC" id="4.2.1.20"/>
    </reaction>
</comment>
<comment type="pathway">
    <text evidence="1">Amino-acid biosynthesis; L-tryptophan biosynthesis; L-tryptophan from chorismate: step 5/5.</text>
</comment>
<comment type="subunit">
    <text evidence="1">Tetramer of two alpha and two beta chains.</text>
</comment>
<comment type="similarity">
    <text evidence="1">Belongs to the TrpA family.</text>
</comment>
<organism>
    <name type="scientific">Bacillus subtilis (strain 168)</name>
    <dbReference type="NCBI Taxonomy" id="224308"/>
    <lineage>
        <taxon>Bacteria</taxon>
        <taxon>Bacillati</taxon>
        <taxon>Bacillota</taxon>
        <taxon>Bacilli</taxon>
        <taxon>Bacillales</taxon>
        <taxon>Bacillaceae</taxon>
        <taxon>Bacillus</taxon>
    </lineage>
</organism>
<dbReference type="EC" id="4.2.1.20" evidence="1"/>
<dbReference type="EMBL" id="M80245">
    <property type="protein sequence ID" value="AAA20866.1"/>
    <property type="molecule type" value="Genomic_DNA"/>
</dbReference>
<dbReference type="EMBL" id="K01391">
    <property type="protein sequence ID" value="AAA22870.1"/>
    <property type="molecule type" value="Genomic_DNA"/>
</dbReference>
<dbReference type="EMBL" id="AL009126">
    <property type="protein sequence ID" value="CAB14179.1"/>
    <property type="molecule type" value="Genomic_DNA"/>
</dbReference>
<dbReference type="EMBL" id="S65045">
    <property type="protein sequence ID" value="AAC60451.2"/>
    <property type="molecule type" value="Genomic_DNA"/>
</dbReference>
<dbReference type="PIR" id="F22794">
    <property type="entry name" value="F22794"/>
</dbReference>
<dbReference type="RefSeq" id="NP_390144.1">
    <property type="nucleotide sequence ID" value="NC_000964.3"/>
</dbReference>
<dbReference type="RefSeq" id="WP_003230608.1">
    <property type="nucleotide sequence ID" value="NZ_OZ025638.1"/>
</dbReference>
<dbReference type="SMR" id="P07601"/>
<dbReference type="FunCoup" id="P07601">
    <property type="interactions" value="450"/>
</dbReference>
<dbReference type="STRING" id="224308.BSU22630"/>
<dbReference type="jPOST" id="P07601"/>
<dbReference type="PaxDb" id="224308-BSU22630"/>
<dbReference type="EnsemblBacteria" id="CAB14179">
    <property type="protein sequence ID" value="CAB14179"/>
    <property type="gene ID" value="BSU_22630"/>
</dbReference>
<dbReference type="GeneID" id="939011"/>
<dbReference type="KEGG" id="bsu:BSU22630"/>
<dbReference type="eggNOG" id="COG0159">
    <property type="taxonomic scope" value="Bacteria"/>
</dbReference>
<dbReference type="InParanoid" id="P07601"/>
<dbReference type="OrthoDB" id="9804578at2"/>
<dbReference type="PhylomeDB" id="P07601"/>
<dbReference type="BioCyc" id="BSUB:BSU22630-MONOMER"/>
<dbReference type="UniPathway" id="UPA00035">
    <property type="reaction ID" value="UER00044"/>
</dbReference>
<dbReference type="Proteomes" id="UP000001570">
    <property type="component" value="Chromosome"/>
</dbReference>
<dbReference type="GO" id="GO:0005829">
    <property type="term" value="C:cytosol"/>
    <property type="evidence" value="ECO:0000318"/>
    <property type="project" value="GO_Central"/>
</dbReference>
<dbReference type="GO" id="GO:0004834">
    <property type="term" value="F:tryptophan synthase activity"/>
    <property type="evidence" value="ECO:0000318"/>
    <property type="project" value="GO_Central"/>
</dbReference>
<dbReference type="GO" id="GO:0000162">
    <property type="term" value="P:L-tryptophan biosynthetic process"/>
    <property type="evidence" value="ECO:0000318"/>
    <property type="project" value="GO_Central"/>
</dbReference>
<dbReference type="CDD" id="cd04724">
    <property type="entry name" value="Tryptophan_synthase_alpha"/>
    <property type="match status" value="1"/>
</dbReference>
<dbReference type="FunFam" id="3.20.20.70:FF:000037">
    <property type="entry name" value="Tryptophan synthase alpha chain"/>
    <property type="match status" value="1"/>
</dbReference>
<dbReference type="Gene3D" id="3.20.20.70">
    <property type="entry name" value="Aldolase class I"/>
    <property type="match status" value="1"/>
</dbReference>
<dbReference type="HAMAP" id="MF_00131">
    <property type="entry name" value="Trp_synth_alpha"/>
    <property type="match status" value="1"/>
</dbReference>
<dbReference type="InterPro" id="IPR013785">
    <property type="entry name" value="Aldolase_TIM"/>
</dbReference>
<dbReference type="InterPro" id="IPR011060">
    <property type="entry name" value="RibuloseP-bd_barrel"/>
</dbReference>
<dbReference type="InterPro" id="IPR018204">
    <property type="entry name" value="Trp_synthase_alpha_AS"/>
</dbReference>
<dbReference type="InterPro" id="IPR002028">
    <property type="entry name" value="Trp_synthase_suA"/>
</dbReference>
<dbReference type="NCBIfam" id="TIGR00262">
    <property type="entry name" value="trpA"/>
    <property type="match status" value="1"/>
</dbReference>
<dbReference type="PANTHER" id="PTHR43406:SF1">
    <property type="entry name" value="TRYPTOPHAN SYNTHASE ALPHA CHAIN, CHLOROPLASTIC"/>
    <property type="match status" value="1"/>
</dbReference>
<dbReference type="PANTHER" id="PTHR43406">
    <property type="entry name" value="TRYPTOPHAN SYNTHASE, ALPHA CHAIN"/>
    <property type="match status" value="1"/>
</dbReference>
<dbReference type="Pfam" id="PF00290">
    <property type="entry name" value="Trp_syntA"/>
    <property type="match status" value="1"/>
</dbReference>
<dbReference type="SUPFAM" id="SSF51366">
    <property type="entry name" value="Ribulose-phoshate binding barrel"/>
    <property type="match status" value="1"/>
</dbReference>
<dbReference type="PROSITE" id="PS00167">
    <property type="entry name" value="TRP_SYNTHASE_ALPHA"/>
    <property type="match status" value="1"/>
</dbReference>
<sequence>MFKLDLQPSEKLFIPFITAGDPVPEVSIELAKSLQKAGATALELGVAYSDPLADGPVIQRASKRALDQGMNIVKAIELGGEMKKNGVNIPIILFTYYNPVLQLNKEYFFALLRENHIDGLLVPDLPLEESNSLQEECKSHEVTYISLVAPTSESRLKTIIEQAEGFVYCVSSLGVTGVRNEFNSSVYPFIRTVKNLSTVPVAVGFGISNREQVIKMNEISDGVVVGSALVRKIEELKDRLISAETRNQALQEFEDYAMAFSGLYSLK</sequence>
<name>TRPA_BACSU</name>
<protein>
    <recommendedName>
        <fullName evidence="1">Tryptophan synthase alpha chain</fullName>
        <ecNumber evidence="1">4.2.1.20</ecNumber>
    </recommendedName>
</protein>
<accession>P07601</accession>
<accession>Q59793</accession>
<keyword id="KW-0028">Amino-acid biosynthesis</keyword>
<keyword id="KW-0057">Aromatic amino acid biosynthesis</keyword>
<keyword id="KW-0456">Lyase</keyword>
<keyword id="KW-1185">Reference proteome</keyword>
<keyword id="KW-0822">Tryptophan biosynthesis</keyword>
<feature type="chain" id="PRO_0000098744" description="Tryptophan synthase alpha chain">
    <location>
        <begin position="1"/>
        <end position="267"/>
    </location>
</feature>
<feature type="active site" description="Proton acceptor" evidence="1">
    <location>
        <position position="43"/>
    </location>
</feature>
<feature type="active site" description="Proton acceptor" evidence="1">
    <location>
        <position position="54"/>
    </location>
</feature>
<feature type="sequence conflict" description="In Ref. 3." evidence="2" ref="3">
    <original>MFKLDLQP</original>
    <variation>MFNLHD</variation>
    <location>
        <begin position="1"/>
        <end position="8"/>
    </location>
</feature>
<feature type="sequence conflict" description="In Ref. 3; AAC60451." evidence="2" ref="3">
    <original>V</original>
    <variation>L</variation>
    <location>
        <position position="23"/>
    </location>
</feature>
<feature type="sequence conflict" description="In Ref. 3; AAC60451." evidence="2" ref="3">
    <original>VSI</original>
    <variation>ISV</variation>
    <location>
        <begin position="26"/>
        <end position="28"/>
    </location>
</feature>
<feature type="sequence conflict" description="In Ref. 3; AAC60451." evidence="2" ref="3">
    <original>K</original>
    <variation>N</variation>
    <location>
        <position position="36"/>
    </location>
</feature>
<feature type="sequence conflict" description="In Ref. 3; AAC60451." evidence="2" ref="3">
    <original>T</original>
    <variation>S</variation>
    <location>
        <position position="40"/>
    </location>
</feature>
<feature type="sequence conflict" description="In Ref. 3; AAC60451." evidence="2" ref="3">
    <original>L</original>
    <variation>I</variation>
    <location>
        <position position="44"/>
    </location>
</feature>
<feature type="sequence conflict" description="In Ref. 3; AAC60451." evidence="2" ref="3">
    <original>AYS</original>
    <variation>PYT</variation>
    <location>
        <begin position="47"/>
        <end position="49"/>
    </location>
</feature>
<feature type="sequence conflict" description="In Ref. 3; AAC60451." evidence="2" ref="3">
    <original>DQ</original>
    <variation>EN</variation>
    <location>
        <begin position="67"/>
        <end position="68"/>
    </location>
</feature>
<feature type="sequence conflict" description="In Ref. 3; AAC60451." evidence="2" ref="3">
    <original>E</original>
    <variation>K</variation>
    <location>
        <position position="81"/>
    </location>
</feature>
<feature type="sequence conflict" description="In Ref. 3; AAC60451." evidence="2" ref="3">
    <original>N</original>
    <variation>H</variation>
    <location>
        <position position="88"/>
    </location>
</feature>
<feature type="sequence conflict" description="In Ref. 3; AAC60451." evidence="2" ref="3">
    <original>QLNKEY</original>
    <variation>ELEKEC</variation>
    <location>
        <begin position="102"/>
        <end position="107"/>
    </location>
</feature>
<feature type="sequence conflict" description="In Ref. 3; AAC60451." evidence="2" ref="3">
    <original>H</original>
    <variation>D</variation>
    <location>
        <position position="116"/>
    </location>
</feature>
<feature type="sequence conflict" description="In Ref. 3; AAC60451." evidence="2" ref="3">
    <original>NS</original>
    <variation>AL</variation>
    <location>
        <begin position="131"/>
        <end position="132"/>
    </location>
</feature>
<feature type="sequence conflict" description="In Ref. 3; AAC60451." evidence="2" ref="3">
    <original>EECKSHEVT</original>
    <variation>KTCKKENIA</variation>
    <location>
        <begin position="135"/>
        <end position="143"/>
    </location>
</feature>
<feature type="sequence conflict" description="In Ref. 3; AAC60451." evidence="2" ref="3">
    <original>S</original>
    <variation>N</variation>
    <location>
        <position position="154"/>
    </location>
</feature>
<feature type="sequence conflict" description="In Ref. 3; AAC60451." evidence="2" ref="3">
    <original>TII</original>
    <variation>IIT</variation>
    <location>
        <begin position="158"/>
        <end position="160"/>
    </location>
</feature>
<feature type="sequence conflict" description="In Ref. 3; AAC60451." evidence="2" ref="3">
    <original>E</original>
    <variation>G</variation>
    <location>
        <position position="164"/>
    </location>
</feature>
<feature type="sequence conflict" description="In Ref. 3; AAC60451." evidence="2" ref="3">
    <original>N</original>
    <variation>S</variation>
    <location>
        <position position="180"/>
    </location>
</feature>
<evidence type="ECO:0000255" key="1">
    <source>
        <dbReference type="HAMAP-Rule" id="MF_00131"/>
    </source>
</evidence>
<evidence type="ECO:0000305" key="2"/>